<evidence type="ECO:0000255" key="1">
    <source>
        <dbReference type="HAMAP-Rule" id="MF_01842"/>
    </source>
</evidence>
<gene>
    <name evidence="1" type="primary">amzA</name>
    <name type="ordered locus">SSO0689</name>
</gene>
<comment type="function">
    <text evidence="1">Probable zinc metalloprotease whose natural substrate is unknown.</text>
</comment>
<comment type="cofactor">
    <cofactor evidence="1">
        <name>Zn(2+)</name>
        <dbReference type="ChEBI" id="CHEBI:29105"/>
    </cofactor>
    <text evidence="1">Binds 2 Zn(2+) ions per subunit. One is catalytic, whereas the other seems to have a structural role.</text>
</comment>
<comment type="subunit">
    <text evidence="1">Monomer.</text>
</comment>
<comment type="similarity">
    <text evidence="1">Belongs to the peptidase M54 family.</text>
</comment>
<protein>
    <recommendedName>
        <fullName evidence="1">Archaemetzincin</fullName>
        <ecNumber evidence="1">3.4.-.-</ecNumber>
    </recommendedName>
</protein>
<sequence>MTEMKILIVTLTYIEKSIIDEIVNNLSSYGLEVDILLDSRKYLPISAFNWERLQYDAEKVLSFLKSIHDFNYDSIIFLADSDGYIDGYNFVFGLTIDNFAIIFLHRLREEFYNRKPDLDLFMKRVVKEVTHEVGHTLGLSHCNTTGCVMNFSNSVEDVDKKQAKFCKNCAHKIEKLSKYLQQK</sequence>
<keyword id="KW-0378">Hydrolase</keyword>
<keyword id="KW-0479">Metal-binding</keyword>
<keyword id="KW-0482">Metalloprotease</keyword>
<keyword id="KW-0645">Protease</keyword>
<keyword id="KW-1185">Reference proteome</keyword>
<keyword id="KW-0862">Zinc</keyword>
<reference key="1">
    <citation type="journal article" date="2000" name="Genome">
        <title>Gene content and organization of a 281-kbp contig from the genome of the extremely thermophilic archaeon, Sulfolobus solfataricus P2.</title>
        <authorList>
            <person name="Charlebois R.L."/>
            <person name="Singh R.K."/>
            <person name="Chan-Weiher C.C.-Y."/>
            <person name="Allard G."/>
            <person name="Chow C."/>
            <person name="Confalonieri F."/>
            <person name="Curtis B."/>
            <person name="Duguet M."/>
            <person name="Erauso G."/>
            <person name="Faguy D."/>
            <person name="Gaasterland T."/>
            <person name="Garrett R.A."/>
            <person name="Gordon P."/>
            <person name="Jeffries A.C."/>
            <person name="Kozera C."/>
            <person name="Kushwaha N."/>
            <person name="Lafleur E."/>
            <person name="Medina N."/>
            <person name="Peng X."/>
            <person name="Penny S.L."/>
            <person name="She Q."/>
            <person name="St Jean A."/>
            <person name="van der Oost J."/>
            <person name="Young F."/>
            <person name="Zivanovic Y."/>
            <person name="Doolittle W.F."/>
            <person name="Ragan M.A."/>
            <person name="Sensen C.W."/>
        </authorList>
    </citation>
    <scope>NUCLEOTIDE SEQUENCE [LARGE SCALE GENOMIC DNA]</scope>
    <source>
        <strain>ATCC 35092 / DSM 1617 / JCM 11322 / P2</strain>
    </source>
</reference>
<reference key="2">
    <citation type="journal article" date="2001" name="Proc. Natl. Acad. Sci. U.S.A.">
        <title>The complete genome of the crenarchaeon Sulfolobus solfataricus P2.</title>
        <authorList>
            <person name="She Q."/>
            <person name="Singh R.K."/>
            <person name="Confalonieri F."/>
            <person name="Zivanovic Y."/>
            <person name="Allard G."/>
            <person name="Awayez M.J."/>
            <person name="Chan-Weiher C.C.-Y."/>
            <person name="Clausen I.G."/>
            <person name="Curtis B.A."/>
            <person name="De Moors A."/>
            <person name="Erauso G."/>
            <person name="Fletcher C."/>
            <person name="Gordon P.M.K."/>
            <person name="Heikamp-de Jong I."/>
            <person name="Jeffries A.C."/>
            <person name="Kozera C.J."/>
            <person name="Medina N."/>
            <person name="Peng X."/>
            <person name="Thi-Ngoc H.P."/>
            <person name="Redder P."/>
            <person name="Schenk M.E."/>
            <person name="Theriault C."/>
            <person name="Tolstrup N."/>
            <person name="Charlebois R.L."/>
            <person name="Doolittle W.F."/>
            <person name="Duguet M."/>
            <person name="Gaasterland T."/>
            <person name="Garrett R.A."/>
            <person name="Ragan M.A."/>
            <person name="Sensen C.W."/>
            <person name="Van der Oost J."/>
        </authorList>
    </citation>
    <scope>NUCLEOTIDE SEQUENCE [LARGE SCALE GENOMIC DNA]</scope>
    <source>
        <strain>ATCC 35092 / DSM 1617 / JCM 11322 / P2</strain>
    </source>
</reference>
<proteinExistence type="inferred from homology"/>
<accession>Q9UX78</accession>
<feature type="chain" id="PRO_0000159636" description="Archaemetzincin">
    <location>
        <begin position="1"/>
        <end position="183"/>
    </location>
</feature>
<feature type="active site" description="Proton acceptor" evidence="1">
    <location>
        <position position="132"/>
    </location>
</feature>
<feature type="binding site" evidence="1">
    <location>
        <position position="131"/>
    </location>
    <ligand>
        <name>Zn(2+)</name>
        <dbReference type="ChEBI" id="CHEBI:29105"/>
        <label>1</label>
        <note>catalytic</note>
    </ligand>
</feature>
<feature type="binding site" evidence="1">
    <location>
        <position position="135"/>
    </location>
    <ligand>
        <name>Zn(2+)</name>
        <dbReference type="ChEBI" id="CHEBI:29105"/>
        <label>1</label>
        <note>catalytic</note>
    </ligand>
</feature>
<feature type="binding site" evidence="1">
    <location>
        <position position="141"/>
    </location>
    <ligand>
        <name>Zn(2+)</name>
        <dbReference type="ChEBI" id="CHEBI:29105"/>
        <label>1</label>
        <note>catalytic</note>
    </ligand>
</feature>
<feature type="binding site" evidence="1">
    <location>
        <position position="142"/>
    </location>
    <ligand>
        <name>Zn(2+)</name>
        <dbReference type="ChEBI" id="CHEBI:29105"/>
        <label>2</label>
    </ligand>
</feature>
<feature type="binding site" evidence="1">
    <location>
        <position position="147"/>
    </location>
    <ligand>
        <name>Zn(2+)</name>
        <dbReference type="ChEBI" id="CHEBI:29105"/>
        <label>2</label>
    </ligand>
</feature>
<feature type="binding site" evidence="1">
    <location>
        <position position="166"/>
    </location>
    <ligand>
        <name>Zn(2+)</name>
        <dbReference type="ChEBI" id="CHEBI:29105"/>
        <label>2</label>
    </ligand>
</feature>
<dbReference type="EC" id="3.4.-.-" evidence="1"/>
<dbReference type="EMBL" id="Y18930">
    <property type="protein sequence ID" value="CAB57614.1"/>
    <property type="molecule type" value="Genomic_DNA"/>
</dbReference>
<dbReference type="EMBL" id="AE006641">
    <property type="protein sequence ID" value="AAK40989.1"/>
    <property type="molecule type" value="Genomic_DNA"/>
</dbReference>
<dbReference type="PIR" id="F90216">
    <property type="entry name" value="F90216"/>
</dbReference>
<dbReference type="RefSeq" id="WP_009991235.1">
    <property type="nucleotide sequence ID" value="NC_002754.1"/>
</dbReference>
<dbReference type="SMR" id="Q9UX78"/>
<dbReference type="STRING" id="273057.SSO0689"/>
<dbReference type="PaxDb" id="273057-SSO0689"/>
<dbReference type="EnsemblBacteria" id="AAK40989">
    <property type="protein sequence ID" value="AAK40989"/>
    <property type="gene ID" value="SSO0689"/>
</dbReference>
<dbReference type="KEGG" id="sso:SSO0689"/>
<dbReference type="PATRIC" id="fig|273057.12.peg.688"/>
<dbReference type="eggNOG" id="arCOG00458">
    <property type="taxonomic scope" value="Archaea"/>
</dbReference>
<dbReference type="HOGENOM" id="CLU_108521_2_0_2"/>
<dbReference type="InParanoid" id="Q9UX78"/>
<dbReference type="PhylomeDB" id="Q9UX78"/>
<dbReference type="Proteomes" id="UP000001974">
    <property type="component" value="Chromosome"/>
</dbReference>
<dbReference type="GO" id="GO:0008237">
    <property type="term" value="F:metallopeptidase activity"/>
    <property type="evidence" value="ECO:0007669"/>
    <property type="project" value="UniProtKB-UniRule"/>
</dbReference>
<dbReference type="GO" id="GO:0008270">
    <property type="term" value="F:zinc ion binding"/>
    <property type="evidence" value="ECO:0007669"/>
    <property type="project" value="UniProtKB-UniRule"/>
</dbReference>
<dbReference type="GO" id="GO:0006508">
    <property type="term" value="P:proteolysis"/>
    <property type="evidence" value="ECO:0007669"/>
    <property type="project" value="UniProtKB-UniRule"/>
</dbReference>
<dbReference type="CDD" id="cd11375">
    <property type="entry name" value="Peptidase_M54"/>
    <property type="match status" value="1"/>
</dbReference>
<dbReference type="Gene3D" id="3.40.390.10">
    <property type="entry name" value="Collagenase (Catalytic Domain)"/>
    <property type="match status" value="1"/>
</dbReference>
<dbReference type="HAMAP" id="MF_01842">
    <property type="entry name" value="Archaemetzincin"/>
    <property type="match status" value="1"/>
</dbReference>
<dbReference type="InterPro" id="IPR024079">
    <property type="entry name" value="MetalloPept_cat_dom_sf"/>
</dbReference>
<dbReference type="InterPro" id="IPR012962">
    <property type="entry name" value="Pept_M54_archaemetzincn"/>
</dbReference>
<dbReference type="InterPro" id="IPR012091">
    <property type="entry name" value="Pept_M54_archaemetzncn_arc/bac"/>
</dbReference>
<dbReference type="NCBIfam" id="NF033823">
    <property type="entry name" value="archmetzin"/>
    <property type="match status" value="1"/>
</dbReference>
<dbReference type="PANTHER" id="PTHR15910">
    <property type="entry name" value="ARCHAEMETZINCIN"/>
    <property type="match status" value="1"/>
</dbReference>
<dbReference type="PANTHER" id="PTHR15910:SF1">
    <property type="entry name" value="ARCHAEMETZINCIN-2"/>
    <property type="match status" value="1"/>
</dbReference>
<dbReference type="Pfam" id="PF07998">
    <property type="entry name" value="Peptidase_M54"/>
    <property type="match status" value="1"/>
</dbReference>
<dbReference type="PIRSF" id="PIRSF005785">
    <property type="entry name" value="Zn-prot_arch"/>
    <property type="match status" value="1"/>
</dbReference>
<dbReference type="SUPFAM" id="SSF55486">
    <property type="entry name" value="Metalloproteases ('zincins'), catalytic domain"/>
    <property type="match status" value="1"/>
</dbReference>
<organism>
    <name type="scientific">Saccharolobus solfataricus (strain ATCC 35092 / DSM 1617 / JCM 11322 / P2)</name>
    <name type="common">Sulfolobus solfataricus</name>
    <dbReference type="NCBI Taxonomy" id="273057"/>
    <lineage>
        <taxon>Archaea</taxon>
        <taxon>Thermoproteota</taxon>
        <taxon>Thermoprotei</taxon>
        <taxon>Sulfolobales</taxon>
        <taxon>Sulfolobaceae</taxon>
        <taxon>Saccharolobus</taxon>
    </lineage>
</organism>
<name>AMZA_SACS2</name>